<dbReference type="EC" id="1.1.1.62"/>
<dbReference type="EMBL" id="CR926074">
    <property type="protein sequence ID" value="CAI29701.1"/>
    <property type="molecule type" value="mRNA"/>
</dbReference>
<dbReference type="RefSeq" id="NP_001127691.1">
    <property type="nucleotide sequence ID" value="NM_001134219.1"/>
</dbReference>
<dbReference type="SMR" id="Q5NVG2"/>
<dbReference type="FunCoup" id="Q5NVG2">
    <property type="interactions" value="674"/>
</dbReference>
<dbReference type="STRING" id="9601.ENSPPYP00000016651"/>
<dbReference type="GeneID" id="100174773"/>
<dbReference type="KEGG" id="pon:100174773"/>
<dbReference type="CTD" id="51170"/>
<dbReference type="eggNOG" id="KOG1201">
    <property type="taxonomic scope" value="Eukaryota"/>
</dbReference>
<dbReference type="InParanoid" id="Q5NVG2"/>
<dbReference type="OrthoDB" id="10253736at2759"/>
<dbReference type="Proteomes" id="UP000001595">
    <property type="component" value="Unplaced"/>
</dbReference>
<dbReference type="GO" id="GO:0005783">
    <property type="term" value="C:endoplasmic reticulum"/>
    <property type="evidence" value="ECO:0007669"/>
    <property type="project" value="UniProtKB-SubCell"/>
</dbReference>
<dbReference type="GO" id="GO:0005811">
    <property type="term" value="C:lipid droplet"/>
    <property type="evidence" value="ECO:0007669"/>
    <property type="project" value="UniProtKB-SubCell"/>
</dbReference>
<dbReference type="GO" id="GO:0004303">
    <property type="term" value="F:estradiol 17-beta-dehydrogenase [NAD(P)+] activity"/>
    <property type="evidence" value="ECO:0007669"/>
    <property type="project" value="UniProtKB-EC"/>
</dbReference>
<dbReference type="GO" id="GO:0006694">
    <property type="term" value="P:steroid biosynthetic process"/>
    <property type="evidence" value="ECO:0007669"/>
    <property type="project" value="UniProtKB-KW"/>
</dbReference>
<dbReference type="CDD" id="cd05339">
    <property type="entry name" value="17beta-HSDXI-like_SDR_c"/>
    <property type="match status" value="1"/>
</dbReference>
<dbReference type="FunFam" id="3.40.50.720:FF:000224">
    <property type="entry name" value="Hydroxysteroid 17-beta dehydrogenase 11"/>
    <property type="match status" value="1"/>
</dbReference>
<dbReference type="Gene3D" id="3.40.50.720">
    <property type="entry name" value="NAD(P)-binding Rossmann-like Domain"/>
    <property type="match status" value="1"/>
</dbReference>
<dbReference type="InterPro" id="IPR036291">
    <property type="entry name" value="NAD(P)-bd_dom_sf"/>
</dbReference>
<dbReference type="InterPro" id="IPR002347">
    <property type="entry name" value="SDR_fam"/>
</dbReference>
<dbReference type="PANTHER" id="PTHR24322:SF489">
    <property type="entry name" value="ESTRADIOL 17-BETA-DEHYDROGENASE 11"/>
    <property type="match status" value="1"/>
</dbReference>
<dbReference type="PANTHER" id="PTHR24322">
    <property type="entry name" value="PKSB"/>
    <property type="match status" value="1"/>
</dbReference>
<dbReference type="Pfam" id="PF00106">
    <property type="entry name" value="adh_short"/>
    <property type="match status" value="1"/>
</dbReference>
<dbReference type="PRINTS" id="PR00081">
    <property type="entry name" value="GDHRDH"/>
</dbReference>
<dbReference type="PRINTS" id="PR00080">
    <property type="entry name" value="SDRFAMILY"/>
</dbReference>
<dbReference type="SUPFAM" id="SSF51735">
    <property type="entry name" value="NAD(P)-binding Rossmann-fold domains"/>
    <property type="match status" value="1"/>
</dbReference>
<accession>Q5NVG2</accession>
<sequence>MKFLLDVLLLLPLLIVCSLESFVKLFIPKRRKSVTGEIVLITGAGHGIGRLTAYEFAKLKSKLVLWDINKHGLEETAAKCKGLGAKVHTFVVDCSNREDIYSAAKKVKAEIGDVSILVNNAGVVYTSDLFATQDPQIEKTFEVNVLAHFWTTKAFLPAMMKNNHGHIVTVASAAGHVSVPFLLAYCSSKFAAVGFHKTLTDELAALQITGVKTTCLCPNFVNTGFIKNPSTSLGPTLEPEEVVNRLMHGILTEQKMIFIPSSIAFLTTLERILPERFLAVLKRKISVKFDAVIGYRMKAQ</sequence>
<keyword id="KW-0256">Endoplasmic reticulum</keyword>
<keyword id="KW-0444">Lipid biosynthesis</keyword>
<keyword id="KW-0551">Lipid droplet</keyword>
<keyword id="KW-0443">Lipid metabolism</keyword>
<keyword id="KW-0521">NADP</keyword>
<keyword id="KW-0560">Oxidoreductase</keyword>
<keyword id="KW-1185">Reference proteome</keyword>
<keyword id="KW-0732">Signal</keyword>
<keyword id="KW-0752">Steroid biosynthesis</keyword>
<gene>
    <name type="primary">HSD17B11</name>
    <name type="synonym">DHRS8</name>
</gene>
<reference key="1">
    <citation type="submission" date="2004-11" db="EMBL/GenBank/DDBJ databases">
        <authorList>
            <consortium name="The German cDNA consortium"/>
        </authorList>
    </citation>
    <scope>NUCLEOTIDE SEQUENCE [LARGE SCALE MRNA]</scope>
    <source>
        <tissue>Brain cortex</tissue>
    </source>
</reference>
<organism>
    <name type="scientific">Pongo abelii</name>
    <name type="common">Sumatran orangutan</name>
    <name type="synonym">Pongo pygmaeus abelii</name>
    <dbReference type="NCBI Taxonomy" id="9601"/>
    <lineage>
        <taxon>Eukaryota</taxon>
        <taxon>Metazoa</taxon>
        <taxon>Chordata</taxon>
        <taxon>Craniata</taxon>
        <taxon>Vertebrata</taxon>
        <taxon>Euteleostomi</taxon>
        <taxon>Mammalia</taxon>
        <taxon>Eutheria</taxon>
        <taxon>Euarchontoglires</taxon>
        <taxon>Primates</taxon>
        <taxon>Haplorrhini</taxon>
        <taxon>Catarrhini</taxon>
        <taxon>Hominidae</taxon>
        <taxon>Pongo</taxon>
    </lineage>
</organism>
<name>DHB11_PONAB</name>
<comment type="function">
    <text evidence="1">Can convert androstan-3-alpha,17-beta-diol (3-alpha-diol) to androsterone in vitro, suggesting that it may participate in androgen metabolism during steroidogenesis. May act by metabolizing compounds that stimulate steroid synthesis and/or by generating metabolites that inhibit it. Has no activity toward DHEA (dehydroepiandrosterone), or A-dione (4-androste-3,17-dione), and only a slight activity toward testosterone to A-dione (By similarity).</text>
</comment>
<comment type="catalytic activity">
    <reaction>
        <text>17beta-estradiol + NAD(+) = estrone + NADH + H(+)</text>
        <dbReference type="Rhea" id="RHEA:24612"/>
        <dbReference type="ChEBI" id="CHEBI:15378"/>
        <dbReference type="ChEBI" id="CHEBI:16469"/>
        <dbReference type="ChEBI" id="CHEBI:17263"/>
        <dbReference type="ChEBI" id="CHEBI:57540"/>
        <dbReference type="ChEBI" id="CHEBI:57945"/>
        <dbReference type="EC" id="1.1.1.62"/>
    </reaction>
</comment>
<comment type="catalytic activity">
    <reaction>
        <text>17beta-estradiol + NADP(+) = estrone + NADPH + H(+)</text>
        <dbReference type="Rhea" id="RHEA:24616"/>
        <dbReference type="ChEBI" id="CHEBI:15378"/>
        <dbReference type="ChEBI" id="CHEBI:16469"/>
        <dbReference type="ChEBI" id="CHEBI:17263"/>
        <dbReference type="ChEBI" id="CHEBI:57783"/>
        <dbReference type="ChEBI" id="CHEBI:58349"/>
        <dbReference type="EC" id="1.1.1.62"/>
    </reaction>
</comment>
<comment type="subcellular location">
    <subcellularLocation>
        <location evidence="2">Endoplasmic reticulum</location>
    </subcellularLocation>
    <subcellularLocation>
        <location evidence="2">Lipid droplet</location>
    </subcellularLocation>
    <text evidence="2">Redistributed from the endoplasmic reticulum to lipids droplets in the cell upon induction of lipids droplet formation.</text>
</comment>
<comment type="similarity">
    <text evidence="4">Belongs to the short-chain dehydrogenases/reductases (SDR) family. 17-beta-HSD 3 subfamily.</text>
</comment>
<protein>
    <recommendedName>
        <fullName>Estradiol 17-beta-dehydrogenase 11</fullName>
        <ecNumber>1.1.1.62</ecNumber>
    </recommendedName>
    <alternativeName>
        <fullName>17-beta-hydroxysteroid dehydrogenase 11</fullName>
        <shortName>17-beta-HSD 11</shortName>
        <shortName>17bHSD11</shortName>
        <shortName>17betaHSD11</shortName>
    </alternativeName>
    <alternativeName>
        <fullName>Dehydrogenase/reductase SDR family member 8</fullName>
    </alternativeName>
</protein>
<evidence type="ECO:0000250" key="1"/>
<evidence type="ECO:0000250" key="2">
    <source>
        <dbReference type="UniProtKB" id="Q9EQ06"/>
    </source>
</evidence>
<evidence type="ECO:0000255" key="3"/>
<evidence type="ECO:0000305" key="4"/>
<feature type="signal peptide" evidence="3">
    <location>
        <begin position="1"/>
        <end position="19"/>
    </location>
</feature>
<feature type="chain" id="PRO_0000031972" description="Estradiol 17-beta-dehydrogenase 11">
    <location>
        <begin position="20"/>
        <end position="300"/>
    </location>
</feature>
<feature type="active site" description="Proton acceptor" evidence="1">
    <location>
        <position position="185"/>
    </location>
</feature>
<feature type="binding site" evidence="1">
    <location>
        <begin position="40"/>
        <end position="64"/>
    </location>
    <ligand>
        <name>NADP(+)</name>
        <dbReference type="ChEBI" id="CHEBI:58349"/>
    </ligand>
</feature>
<feature type="binding site" evidence="1">
    <location>
        <position position="172"/>
    </location>
    <ligand>
        <name>substrate</name>
    </ligand>
</feature>
<proteinExistence type="evidence at transcript level"/>